<dbReference type="PIR" id="A01951">
    <property type="entry name" value="KVRB2K"/>
</dbReference>
<dbReference type="FunCoup" id="P01688">
    <property type="interactions" value="277"/>
</dbReference>
<dbReference type="PaxDb" id="9986-ENSOCUP00000003326"/>
<dbReference type="eggNOG" id="ENOG502S3KF">
    <property type="taxonomic scope" value="Eukaryota"/>
</dbReference>
<dbReference type="InParanoid" id="P01688"/>
<dbReference type="Proteomes" id="UP000001811">
    <property type="component" value="Unplaced"/>
</dbReference>
<dbReference type="GO" id="GO:0019814">
    <property type="term" value="C:immunoglobulin complex"/>
    <property type="evidence" value="ECO:0007669"/>
    <property type="project" value="UniProtKB-KW"/>
</dbReference>
<dbReference type="GO" id="GO:0002250">
    <property type="term" value="P:adaptive immune response"/>
    <property type="evidence" value="ECO:0007669"/>
    <property type="project" value="UniProtKB-KW"/>
</dbReference>
<dbReference type="FunFam" id="2.60.40.10:FF:000212">
    <property type="entry name" value="Immunoglobulin kappa chain variable 12-38"/>
    <property type="match status" value="1"/>
</dbReference>
<dbReference type="Gene3D" id="2.60.40.10">
    <property type="entry name" value="Immunoglobulins"/>
    <property type="match status" value="1"/>
</dbReference>
<dbReference type="InterPro" id="IPR007110">
    <property type="entry name" value="Ig-like_dom"/>
</dbReference>
<dbReference type="InterPro" id="IPR036179">
    <property type="entry name" value="Ig-like_dom_sf"/>
</dbReference>
<dbReference type="InterPro" id="IPR013783">
    <property type="entry name" value="Ig-like_fold"/>
</dbReference>
<dbReference type="InterPro" id="IPR003599">
    <property type="entry name" value="Ig_sub"/>
</dbReference>
<dbReference type="InterPro" id="IPR013106">
    <property type="entry name" value="Ig_V-set"/>
</dbReference>
<dbReference type="InterPro" id="IPR050150">
    <property type="entry name" value="IgV_Light_Chain"/>
</dbReference>
<dbReference type="PANTHER" id="PTHR23267">
    <property type="entry name" value="IMMUNOGLOBULIN LIGHT CHAIN"/>
    <property type="match status" value="1"/>
</dbReference>
<dbReference type="Pfam" id="PF07686">
    <property type="entry name" value="V-set"/>
    <property type="match status" value="1"/>
</dbReference>
<dbReference type="SMART" id="SM00409">
    <property type="entry name" value="IG"/>
    <property type="match status" value="1"/>
</dbReference>
<dbReference type="SMART" id="SM00406">
    <property type="entry name" value="IGv"/>
    <property type="match status" value="1"/>
</dbReference>
<dbReference type="SUPFAM" id="SSF48726">
    <property type="entry name" value="Immunoglobulin"/>
    <property type="match status" value="1"/>
</dbReference>
<dbReference type="PROSITE" id="PS50835">
    <property type="entry name" value="IG_LIKE"/>
    <property type="match status" value="1"/>
</dbReference>
<name>KV07_RABIT</name>
<protein>
    <recommendedName>
        <fullName>Ig kappa chain V region K-25</fullName>
    </recommendedName>
</protein>
<organism>
    <name type="scientific">Oryctolagus cuniculus</name>
    <name type="common">Rabbit</name>
    <dbReference type="NCBI Taxonomy" id="9986"/>
    <lineage>
        <taxon>Eukaryota</taxon>
        <taxon>Metazoa</taxon>
        <taxon>Chordata</taxon>
        <taxon>Craniata</taxon>
        <taxon>Vertebrata</taxon>
        <taxon>Euteleostomi</taxon>
        <taxon>Mammalia</taxon>
        <taxon>Eutheria</taxon>
        <taxon>Euarchontoglires</taxon>
        <taxon>Glires</taxon>
        <taxon>Lagomorpha</taxon>
        <taxon>Leporidae</taxon>
        <taxon>Oryctolagus</taxon>
    </lineage>
</organism>
<comment type="miscellaneous">
    <text>Residues 109-139 of the constant region are identical with the corresponding residues of rabbit 4135 kappa chain.</text>
</comment>
<comment type="miscellaneous">
    <text>This chain was obtained from antibody to type III pneumococci and was isolated from the serum of a single rabbit.</text>
</comment>
<accession>P01688</accession>
<proteinExistence type="evidence at protein level"/>
<reference key="1">
    <citation type="journal article" date="1975" name="Biochem. J.">
        <title>Comparison of the amino acid sequences of the variable domains of two homogeneous rabbit antibodies to type III pneumococcal polysaccharide.</title>
        <authorList>
            <person name="Jaton J.-C."/>
        </authorList>
    </citation>
    <scope>PROTEIN SEQUENCE</scope>
</reference>
<keyword id="KW-1064">Adaptive immunity</keyword>
<keyword id="KW-0903">Direct protein sequencing</keyword>
<keyword id="KW-0391">Immunity</keyword>
<keyword id="KW-1280">Immunoglobulin</keyword>
<keyword id="KW-1185">Reference proteome</keyword>
<feature type="chain" id="PRO_0000059726" description="Ig kappa chain V region K-25">
    <location>
        <begin position="1"/>
        <end position="108" status="greater than"/>
    </location>
</feature>
<feature type="region of interest" description="Framework-1">
    <location>
        <begin position="1"/>
        <end position="23"/>
    </location>
</feature>
<feature type="region of interest" description="Complementarity-determining-1">
    <location>
        <begin position="24"/>
        <end position="34"/>
    </location>
</feature>
<feature type="region of interest" description="Framework-2">
    <location>
        <begin position="35"/>
        <end position="49"/>
    </location>
</feature>
<feature type="region of interest" description="Complementarity-determining-2">
    <location>
        <begin position="50"/>
        <end position="56"/>
    </location>
</feature>
<feature type="region of interest" description="Framework-3">
    <location>
        <begin position="57"/>
        <end position="88"/>
    </location>
</feature>
<feature type="region of interest" description="Complementarity-determining-3">
    <location>
        <begin position="89"/>
        <end position="97"/>
    </location>
</feature>
<feature type="region of interest" description="Framework-4">
    <location>
        <begin position="98"/>
        <end position="107"/>
    </location>
</feature>
<feature type="non-terminal residue">
    <location>
        <position position="108"/>
    </location>
</feature>
<sequence length="108" mass="11433">AVELTQTPASVEAAVGGTVTIKCQASQBIYSYLSWYQQKPGQPPKLLIYKASTLASGVSSRFKGSGSGTEFTLTISDLZCADAATYYCQTYSYSSTYFGGGTEVVVKG</sequence>